<sequence>MAATAREDGASGQERGQRGCEHYDRGCLLKAPCCDKLYTCRLCHDNNEDHQLDRFKVKEVQCINCEKIQHAQQTCEECSTLFGEYYCDICHLFDKDKKQYHCENCGICRIGPKEDFFHCLKCNLCLAMNLQGRHKCIENVSRQNCPICLEDIHTSRVVAHVLPCGHLLHRTCYEEMLKEGYRCPLCMHSALDMTRYWRQLDDEVAQTPMPSEYQNMTVDILCNDCNGRSTVQFHILGMKCKICESYNTAQAGGRRISLDQQ</sequence>
<reference key="1">
    <citation type="journal article" date="2009" name="J. Biol. Chem.">
        <title>Identification and characterization of two novel isoforms of Pirh2 ubiquitin ligase that negatively regulate p53 independent of RING finger domains.</title>
        <authorList>
            <person name="Corcoran C.A."/>
            <person name="Montalbano J."/>
            <person name="Sun H."/>
            <person name="He Q."/>
            <person name="Huang Y."/>
            <person name="Sheikh M.S."/>
        </authorList>
    </citation>
    <scope>NUCLEOTIDE SEQUENCE [MRNA] (ISOFORMS 1; 2 AND 3)</scope>
    <scope>FUNCTION</scope>
    <scope>SUBUNIT</scope>
    <scope>INTERACTION WITH MDM2</scope>
    <scope>UBIQUITINATION</scope>
    <scope>SUBCELLULAR LOCATION</scope>
    <scope>ALTERNATIVE SPLICING</scope>
</reference>
<reference key="2">
    <citation type="submission" date="2000-03" db="EMBL/GenBank/DDBJ databases">
        <authorList>
            <person name="Beitel L.K."/>
            <person name="Lumbroso R."/>
            <person name="Panet-Raymond V."/>
            <person name="de Tourreil A.S."/>
            <person name="Pinsky L."/>
            <person name="Trifiro M.A."/>
        </authorList>
    </citation>
    <scope>NUCLEOTIDE SEQUENCE [MRNA] (ISOFORM 1)</scope>
</reference>
<reference key="3">
    <citation type="submission" date="2000-04" db="EMBL/GenBank/DDBJ databases">
        <title>Identification of PLAG1 interacting proteins.</title>
        <authorList>
            <person name="Braem C.V."/>
            <person name="Kas K."/>
        </authorList>
    </citation>
    <scope>NUCLEOTIDE SEQUENCE [MRNA] (ISOFORM 1)</scope>
</reference>
<reference key="4">
    <citation type="submission" date="2000-09" db="EMBL/GenBank/DDBJ databases">
        <title>A novel human zinc-finger protein.</title>
        <authorList>
            <person name="Wu H.-S."/>
            <person name="Chou C.-M."/>
            <person name="Leu J.-H."/>
            <person name="Huang C.-J."/>
        </authorList>
    </citation>
    <scope>NUCLEOTIDE SEQUENCE [MRNA] (ISOFORM 1)</scope>
</reference>
<reference key="5">
    <citation type="journal article" date="2010" name="FEBS Lett.">
        <title>A novel hPirh2 splicing variant without ubiquitin protein ligase activity interacts with p53 and is down-regulated in hepatocellular carcinoma.</title>
        <authorList>
            <person name="Wu G."/>
            <person name="Sun M."/>
            <person name="Zhang L."/>
            <person name="Zhou J."/>
            <person name="Wang Y."/>
            <person name="Huo K."/>
        </authorList>
    </citation>
    <scope>NUCLEOTIDE SEQUENCE [MRNA] (ISOFORM 4)</scope>
    <scope>FUNCTION (ISOFORM 4)</scope>
    <scope>INDUCTION (ISOFORM 4)</scope>
</reference>
<reference key="6">
    <citation type="journal article" date="2010" name="Mol. Cell. Pharmacol.">
        <title>Identification of Pirh2D, an additional novel isoform of Pirh2 ubiquitin ligase.</title>
        <authorList>
            <person name="Shi J."/>
            <person name="Huang Y."/>
            <person name="Sheikh M.S."/>
        </authorList>
    </citation>
    <scope>NUCLEOTIDE SEQUENCE [MRNA] (ISOFORM 5)</scope>
    <scope>ALTERNATIVE SPLICING</scope>
</reference>
<reference key="7">
    <citation type="journal article" date="2004" name="Nat. Genet.">
        <title>Complete sequencing and characterization of 21,243 full-length human cDNAs.</title>
        <authorList>
            <person name="Ota T."/>
            <person name="Suzuki Y."/>
            <person name="Nishikawa T."/>
            <person name="Otsuki T."/>
            <person name="Sugiyama T."/>
            <person name="Irie R."/>
            <person name="Wakamatsu A."/>
            <person name="Hayashi K."/>
            <person name="Sato H."/>
            <person name="Nagai K."/>
            <person name="Kimura K."/>
            <person name="Makita H."/>
            <person name="Sekine M."/>
            <person name="Obayashi M."/>
            <person name="Nishi T."/>
            <person name="Shibahara T."/>
            <person name="Tanaka T."/>
            <person name="Ishii S."/>
            <person name="Yamamoto J."/>
            <person name="Saito K."/>
            <person name="Kawai Y."/>
            <person name="Isono Y."/>
            <person name="Nakamura Y."/>
            <person name="Nagahari K."/>
            <person name="Murakami K."/>
            <person name="Yasuda T."/>
            <person name="Iwayanagi T."/>
            <person name="Wagatsuma M."/>
            <person name="Shiratori A."/>
            <person name="Sudo H."/>
            <person name="Hosoiri T."/>
            <person name="Kaku Y."/>
            <person name="Kodaira H."/>
            <person name="Kondo H."/>
            <person name="Sugawara M."/>
            <person name="Takahashi M."/>
            <person name="Kanda K."/>
            <person name="Yokoi T."/>
            <person name="Furuya T."/>
            <person name="Kikkawa E."/>
            <person name="Omura Y."/>
            <person name="Abe K."/>
            <person name="Kamihara K."/>
            <person name="Katsuta N."/>
            <person name="Sato K."/>
            <person name="Tanikawa M."/>
            <person name="Yamazaki M."/>
            <person name="Ninomiya K."/>
            <person name="Ishibashi T."/>
            <person name="Yamashita H."/>
            <person name="Murakawa K."/>
            <person name="Fujimori K."/>
            <person name="Tanai H."/>
            <person name="Kimata M."/>
            <person name="Watanabe M."/>
            <person name="Hiraoka S."/>
            <person name="Chiba Y."/>
            <person name="Ishida S."/>
            <person name="Ono Y."/>
            <person name="Takiguchi S."/>
            <person name="Watanabe S."/>
            <person name="Yosida M."/>
            <person name="Hotuta T."/>
            <person name="Kusano J."/>
            <person name="Kanehori K."/>
            <person name="Takahashi-Fujii A."/>
            <person name="Hara H."/>
            <person name="Tanase T.-O."/>
            <person name="Nomura Y."/>
            <person name="Togiya S."/>
            <person name="Komai F."/>
            <person name="Hara R."/>
            <person name="Takeuchi K."/>
            <person name="Arita M."/>
            <person name="Imose N."/>
            <person name="Musashino K."/>
            <person name="Yuuki H."/>
            <person name="Oshima A."/>
            <person name="Sasaki N."/>
            <person name="Aotsuka S."/>
            <person name="Yoshikawa Y."/>
            <person name="Matsunawa H."/>
            <person name="Ichihara T."/>
            <person name="Shiohata N."/>
            <person name="Sano S."/>
            <person name="Moriya S."/>
            <person name="Momiyama H."/>
            <person name="Satoh N."/>
            <person name="Takami S."/>
            <person name="Terashima Y."/>
            <person name="Suzuki O."/>
            <person name="Nakagawa S."/>
            <person name="Senoh A."/>
            <person name="Mizoguchi H."/>
            <person name="Goto Y."/>
            <person name="Shimizu F."/>
            <person name="Wakebe H."/>
            <person name="Hishigaki H."/>
            <person name="Watanabe T."/>
            <person name="Sugiyama A."/>
            <person name="Takemoto M."/>
            <person name="Kawakami B."/>
            <person name="Yamazaki M."/>
            <person name="Watanabe K."/>
            <person name="Kumagai A."/>
            <person name="Itakura S."/>
            <person name="Fukuzumi Y."/>
            <person name="Fujimori Y."/>
            <person name="Komiyama M."/>
            <person name="Tashiro H."/>
            <person name="Tanigami A."/>
            <person name="Fujiwara T."/>
            <person name="Ono T."/>
            <person name="Yamada K."/>
            <person name="Fujii Y."/>
            <person name="Ozaki K."/>
            <person name="Hirao M."/>
            <person name="Ohmori Y."/>
            <person name="Kawabata A."/>
            <person name="Hikiji T."/>
            <person name="Kobatake N."/>
            <person name="Inagaki H."/>
            <person name="Ikema Y."/>
            <person name="Okamoto S."/>
            <person name="Okitani R."/>
            <person name="Kawakami T."/>
            <person name="Noguchi S."/>
            <person name="Itoh T."/>
            <person name="Shigeta K."/>
            <person name="Senba T."/>
            <person name="Matsumura K."/>
            <person name="Nakajima Y."/>
            <person name="Mizuno T."/>
            <person name="Morinaga M."/>
            <person name="Sasaki M."/>
            <person name="Togashi T."/>
            <person name="Oyama M."/>
            <person name="Hata H."/>
            <person name="Watanabe M."/>
            <person name="Komatsu T."/>
            <person name="Mizushima-Sugano J."/>
            <person name="Satoh T."/>
            <person name="Shirai Y."/>
            <person name="Takahashi Y."/>
            <person name="Nakagawa K."/>
            <person name="Okumura K."/>
            <person name="Nagase T."/>
            <person name="Nomura N."/>
            <person name="Kikuchi H."/>
            <person name="Masuho Y."/>
            <person name="Yamashita R."/>
            <person name="Nakai K."/>
            <person name="Yada T."/>
            <person name="Nakamura Y."/>
            <person name="Ohara O."/>
            <person name="Isogai T."/>
            <person name="Sugano S."/>
        </authorList>
    </citation>
    <scope>NUCLEOTIDE SEQUENCE [LARGE SCALE MRNA] (ISOFORM 1)</scope>
    <source>
        <tissue>Brain</tissue>
    </source>
</reference>
<reference key="8">
    <citation type="submission" date="2005-03" db="EMBL/GenBank/DDBJ databases">
        <authorList>
            <person name="Totoki Y."/>
            <person name="Toyoda A."/>
            <person name="Takeda T."/>
            <person name="Sakaki Y."/>
            <person name="Tanaka A."/>
            <person name="Yokoyama S."/>
            <person name="Ohara O."/>
            <person name="Nagase T."/>
            <person name="Kikuno R.F."/>
        </authorList>
    </citation>
    <scope>NUCLEOTIDE SEQUENCE [LARGE SCALE MRNA] (ISOFORM 1)</scope>
    <source>
        <tissue>Brain</tissue>
    </source>
</reference>
<reference key="9">
    <citation type="journal article" date="2005" name="Nature">
        <title>Generation and annotation of the DNA sequences of human chromosomes 2 and 4.</title>
        <authorList>
            <person name="Hillier L.W."/>
            <person name="Graves T.A."/>
            <person name="Fulton R.S."/>
            <person name="Fulton L.A."/>
            <person name="Pepin K.H."/>
            <person name="Minx P."/>
            <person name="Wagner-McPherson C."/>
            <person name="Layman D."/>
            <person name="Wylie K."/>
            <person name="Sekhon M."/>
            <person name="Becker M.C."/>
            <person name="Fewell G.A."/>
            <person name="Delehaunty K.D."/>
            <person name="Miner T.L."/>
            <person name="Nash W.E."/>
            <person name="Kremitzki C."/>
            <person name="Oddy L."/>
            <person name="Du H."/>
            <person name="Sun H."/>
            <person name="Bradshaw-Cordum H."/>
            <person name="Ali J."/>
            <person name="Carter J."/>
            <person name="Cordes M."/>
            <person name="Harris A."/>
            <person name="Isak A."/>
            <person name="van Brunt A."/>
            <person name="Nguyen C."/>
            <person name="Du F."/>
            <person name="Courtney L."/>
            <person name="Kalicki J."/>
            <person name="Ozersky P."/>
            <person name="Abbott S."/>
            <person name="Armstrong J."/>
            <person name="Belter E.A."/>
            <person name="Caruso L."/>
            <person name="Cedroni M."/>
            <person name="Cotton M."/>
            <person name="Davidson T."/>
            <person name="Desai A."/>
            <person name="Elliott G."/>
            <person name="Erb T."/>
            <person name="Fronick C."/>
            <person name="Gaige T."/>
            <person name="Haakenson W."/>
            <person name="Haglund K."/>
            <person name="Holmes A."/>
            <person name="Harkins R."/>
            <person name="Kim K."/>
            <person name="Kruchowski S.S."/>
            <person name="Strong C.M."/>
            <person name="Grewal N."/>
            <person name="Goyea E."/>
            <person name="Hou S."/>
            <person name="Levy A."/>
            <person name="Martinka S."/>
            <person name="Mead K."/>
            <person name="McLellan M.D."/>
            <person name="Meyer R."/>
            <person name="Randall-Maher J."/>
            <person name="Tomlinson C."/>
            <person name="Dauphin-Kohlberg S."/>
            <person name="Kozlowicz-Reilly A."/>
            <person name="Shah N."/>
            <person name="Swearengen-Shahid S."/>
            <person name="Snider J."/>
            <person name="Strong J.T."/>
            <person name="Thompson J."/>
            <person name="Yoakum M."/>
            <person name="Leonard S."/>
            <person name="Pearman C."/>
            <person name="Trani L."/>
            <person name="Radionenko M."/>
            <person name="Waligorski J.E."/>
            <person name="Wang C."/>
            <person name="Rock S.M."/>
            <person name="Tin-Wollam A.-M."/>
            <person name="Maupin R."/>
            <person name="Latreille P."/>
            <person name="Wendl M.C."/>
            <person name="Yang S.-P."/>
            <person name="Pohl C."/>
            <person name="Wallis J.W."/>
            <person name="Spieth J."/>
            <person name="Bieri T.A."/>
            <person name="Berkowicz N."/>
            <person name="Nelson J.O."/>
            <person name="Osborne J."/>
            <person name="Ding L."/>
            <person name="Meyer R."/>
            <person name="Sabo A."/>
            <person name="Shotland Y."/>
            <person name="Sinha P."/>
            <person name="Wohldmann P.E."/>
            <person name="Cook L.L."/>
            <person name="Hickenbotham M.T."/>
            <person name="Eldred J."/>
            <person name="Williams D."/>
            <person name="Jones T.A."/>
            <person name="She X."/>
            <person name="Ciccarelli F.D."/>
            <person name="Izaurralde E."/>
            <person name="Taylor J."/>
            <person name="Schmutz J."/>
            <person name="Myers R.M."/>
            <person name="Cox D.R."/>
            <person name="Huang X."/>
            <person name="McPherson J.D."/>
            <person name="Mardis E.R."/>
            <person name="Clifton S.W."/>
            <person name="Warren W.C."/>
            <person name="Chinwalla A.T."/>
            <person name="Eddy S.R."/>
            <person name="Marra M.A."/>
            <person name="Ovcharenko I."/>
            <person name="Furey T.S."/>
            <person name="Miller W."/>
            <person name="Eichler E.E."/>
            <person name="Bork P."/>
            <person name="Suyama M."/>
            <person name="Torrents D."/>
            <person name="Waterston R.H."/>
            <person name="Wilson R.K."/>
        </authorList>
    </citation>
    <scope>NUCLEOTIDE SEQUENCE [LARGE SCALE GENOMIC DNA]</scope>
</reference>
<reference key="10">
    <citation type="submission" date="2005-07" db="EMBL/GenBank/DDBJ databases">
        <authorList>
            <person name="Mural R.J."/>
            <person name="Istrail S."/>
            <person name="Sutton G.G."/>
            <person name="Florea L."/>
            <person name="Halpern A.L."/>
            <person name="Mobarry C.M."/>
            <person name="Lippert R."/>
            <person name="Walenz B."/>
            <person name="Shatkay H."/>
            <person name="Dew I."/>
            <person name="Miller J.R."/>
            <person name="Flanigan M.J."/>
            <person name="Edwards N.J."/>
            <person name="Bolanos R."/>
            <person name="Fasulo D."/>
            <person name="Halldorsson B.V."/>
            <person name="Hannenhalli S."/>
            <person name="Turner R."/>
            <person name="Yooseph S."/>
            <person name="Lu F."/>
            <person name="Nusskern D.R."/>
            <person name="Shue B.C."/>
            <person name="Zheng X.H."/>
            <person name="Zhong F."/>
            <person name="Delcher A.L."/>
            <person name="Huson D.H."/>
            <person name="Kravitz S.A."/>
            <person name="Mouchard L."/>
            <person name="Reinert K."/>
            <person name="Remington K.A."/>
            <person name="Clark A.G."/>
            <person name="Waterman M.S."/>
            <person name="Eichler E.E."/>
            <person name="Adams M.D."/>
            <person name="Hunkapiller M.W."/>
            <person name="Myers E.W."/>
            <person name="Venter J.C."/>
        </authorList>
    </citation>
    <scope>NUCLEOTIDE SEQUENCE [LARGE SCALE GENOMIC DNA]</scope>
</reference>
<reference key="11">
    <citation type="journal article" date="2004" name="Genome Res.">
        <title>The status, quality, and expansion of the NIH full-length cDNA project: the Mammalian Gene Collection (MGC).</title>
        <authorList>
            <consortium name="The MGC Project Team"/>
        </authorList>
    </citation>
    <scope>NUCLEOTIDE SEQUENCE [LARGE SCALE MRNA] (ISOFORM 1)</scope>
    <source>
        <tissue>Brain</tissue>
    </source>
</reference>
<reference key="12">
    <citation type="journal article" date="2004" name="J. Biol. Chem.">
        <title>Control of human PIRH2 protein stability: involvement of TIP60 and the proteosome.</title>
        <authorList>
            <person name="Logan I.R."/>
            <person name="Sapountzi V."/>
            <person name="Gaughan L."/>
            <person name="Neal D.E."/>
            <person name="Robson C.N."/>
        </authorList>
    </citation>
    <scope>UBIQUITINATION</scope>
    <scope>INTERACTION WITH KAT5</scope>
    <scope>SUBCELLULAR LOCATION</scope>
</reference>
<reference key="13">
    <citation type="journal article" date="2005" name="Biochem. Biophys. Res. Commun.">
        <title>A new human gene hNTKL-BP1 interacts with hPirh2.</title>
        <authorList>
            <person name="Zhang L."/>
            <person name="Li J."/>
            <person name="Wang C."/>
            <person name="Ma Y."/>
            <person name="Huo K."/>
        </authorList>
    </citation>
    <scope>INTERACTION WITH GORAB</scope>
    <scope>SUBCELLULAR LOCATION</scope>
</reference>
<reference key="14">
    <citation type="journal article" date="2006" name="Mol. Cell. Biol.">
        <title>Human PIRH2 enhances androgen receptor signaling through inhibition of histone deacetylase 1 and is overexpressed in prostate cancer.</title>
        <authorList>
            <person name="Logan I.R."/>
            <person name="Gaughan L."/>
            <person name="McCracken S.R.C."/>
            <person name="Sapountzi V."/>
            <person name="Leung H.Y."/>
            <person name="Robson C.N."/>
        </authorList>
    </citation>
    <scope>FUNCTION</scope>
    <scope>INTERACTION WITH AR AND KAT5</scope>
    <scope>SUBCELLULAR LOCATION</scope>
</reference>
<reference key="15">
    <citation type="journal article" date="2007" name="Biochem. Biophys. Res. Commun.">
        <title>PLAGL2 controls the stability of Pirh2, an E3 ubiquitin ligase for p53.</title>
        <authorList>
            <person name="Zheng G."/>
            <person name="Ning J."/>
            <person name="Yang Y.-C."/>
        </authorList>
    </citation>
    <scope>SUBUNIT</scope>
    <scope>INTERACTION WITH PLAGL2</scope>
    <scope>PROTEASOMAL DEGRADATION</scope>
</reference>
<reference key="16">
    <citation type="journal article" date="2007" name="Cancer Res.">
        <title>Pirh2 promotes ubiquitin-dependent degradation of the cyclin-dependent kinase inhibitor p27Kip1.</title>
        <authorList>
            <person name="Hattori T."/>
            <person name="Isobe T."/>
            <person name="Abe K."/>
            <person name="Kikuchi H."/>
            <person name="Kitagawa K."/>
            <person name="Oda T."/>
            <person name="Uchida C."/>
            <person name="Kitagawa M."/>
        </authorList>
    </citation>
    <scope>FUNCTION</scope>
    <scope>SUBCELLULAR LOCATION</scope>
    <scope>INDUCTION</scope>
</reference>
<reference key="17">
    <citation type="journal article" date="2008" name="J. Proteome Res.">
        <title>Phosphoproteome of resting human platelets.</title>
        <authorList>
            <person name="Zahedi R.P."/>
            <person name="Lewandrowski U."/>
            <person name="Wiesner J."/>
            <person name="Wortelkamp S."/>
            <person name="Moebius J."/>
            <person name="Schuetz C."/>
            <person name="Walter U."/>
            <person name="Gambaryan S."/>
            <person name="Sickmann A."/>
        </authorList>
    </citation>
    <scope>PHOSPHORYLATION [LARGE SCALE ANALYSIS] AT SER-257</scope>
    <scope>IDENTIFICATION BY MASS SPECTROMETRY [LARGE SCALE ANALYSIS]</scope>
    <source>
        <tissue>Platelet</tissue>
    </source>
</reference>
<reference key="18">
    <citation type="journal article" date="2008" name="Mol. Cell. Biochem.">
        <title>Ubiquitylation of epsilon-COP by PIRH2 and regulation of the secretion of PSA.</title>
        <authorList>
            <person name="Maruyama S."/>
            <person name="Miyajima N."/>
            <person name="Bohgaki M."/>
            <person name="Tsukiyama T."/>
            <person name="Shigemura M."/>
            <person name="Nonomura K."/>
            <person name="Hatakeyama S."/>
        </authorList>
    </citation>
    <scope>FUNCTION</scope>
    <scope>INTERACTION WITH COPE</scope>
</reference>
<reference key="19">
    <citation type="journal article" date="2008" name="Proc. Natl. Acad. Sci. U.S.A.">
        <title>A quantitative atlas of mitotic phosphorylation.</title>
        <authorList>
            <person name="Dephoure N."/>
            <person name="Zhou C."/>
            <person name="Villen J."/>
            <person name="Beausoleil S.A."/>
            <person name="Bakalarski C.E."/>
            <person name="Elledge S.J."/>
            <person name="Gygi S.P."/>
        </authorList>
    </citation>
    <scope>IDENTIFICATION BY MASS SPECTROMETRY [LARGE SCALE ANALYSIS]</scope>
    <source>
        <tissue>Cervix carcinoma</tissue>
    </source>
</reference>
<reference key="20">
    <citation type="journal article" date="2011" name="Mol. Cancer Res.">
        <title>Pirh2, a ubiquitin E3 ligase, inhibits p73 transcriptional activity by promoting its ubiquitination.</title>
        <authorList>
            <person name="Wu H."/>
            <person name="Zeinab R.A."/>
            <person name="Flores E.R."/>
            <person name="Leng R.P."/>
        </authorList>
    </citation>
    <scope>FUNCTION</scope>
</reference>
<reference key="21">
    <citation type="journal article" date="2011" name="Mol. Cell. Biol.">
        <title>Pirh2 E3 ubiquitin ligase monoubiquitinates DNA polymerase eta to suppress translesion DNA synthesis.</title>
        <authorList>
            <person name="Jung Y.S."/>
            <person name="Hakem A."/>
            <person name="Hakem R."/>
            <person name="Chen X."/>
        </authorList>
    </citation>
    <scope>FUNCTION</scope>
</reference>
<reference key="22">
    <citation type="journal article" date="2013" name="J. Proteome Res.">
        <title>Toward a comprehensive characterization of a human cancer cell phosphoproteome.</title>
        <authorList>
            <person name="Zhou H."/>
            <person name="Di Palma S."/>
            <person name="Preisinger C."/>
            <person name="Peng M."/>
            <person name="Polat A.N."/>
            <person name="Heck A.J."/>
            <person name="Mohammed S."/>
        </authorList>
    </citation>
    <scope>PHOSPHORYLATION [LARGE SCALE ANALYSIS] AT SER-257</scope>
    <scope>IDENTIFICATION BY MASS SPECTROMETRY [LARGE SCALE ANALYSIS]</scope>
    <source>
        <tissue>Cervix carcinoma</tissue>
        <tissue>Erythroleukemia</tissue>
    </source>
</reference>
<reference key="23">
    <citation type="journal article" date="2021" name="Mol. Cell">
        <title>Convergence of mammalian RQC and C-end rule proteolytic pathways via alanine tailing.</title>
        <authorList>
            <person name="Thrun A."/>
            <person name="Garzia A."/>
            <person name="Kigoshi-Tansho Y."/>
            <person name="Patil P.R."/>
            <person name="Umbaugh C.S."/>
            <person name="Dallinger T."/>
            <person name="Liu J."/>
            <person name="Kreger S."/>
            <person name="Patrizi A."/>
            <person name="Cox G.A."/>
            <person name="Tuschl T."/>
            <person name="Joazeiro C.A.P."/>
        </authorList>
    </citation>
    <scope>FUNCTION</scope>
    <scope>CATALYTIC ACTIVITY</scope>
    <scope>PATHWAY</scope>
    <scope>MUTAGENESIS OF MET-176</scope>
</reference>
<reference key="24">
    <citation type="journal article" date="2008" name="Nat. Struct. Mol. Biol.">
        <title>Molecular basis of Pirh2-mediated p53 ubiquitylation.</title>
        <authorList>
            <person name="Sheng Y."/>
            <person name="Laister R.C."/>
            <person name="Lemak A."/>
            <person name="Wu B."/>
            <person name="Tai E."/>
            <person name="Duan S."/>
            <person name="Lukin J."/>
            <person name="Sunnerhagen M."/>
            <person name="Srisailam S."/>
            <person name="Karra M."/>
            <person name="Benchimol S."/>
            <person name="Arrowsmith C.H."/>
        </authorList>
    </citation>
    <scope>STRUCTURE BY NMR OF 138-189 IN COMPLEX WITH ZINC IONS</scope>
    <scope>FUNCTION</scope>
    <scope>MUTAGENESIS OF MET-176 AND CYS-186</scope>
    <scope>INTERACTION WITH UBE2D2</scope>
</reference>
<protein>
    <recommendedName>
        <fullName>RING finger and CHY zinc finger domain-containing protein 1</fullName>
        <ecNumber evidence="10 11 15">2.3.2.27</ecNumber>
    </recommendedName>
    <alternativeName>
        <fullName>Androgen receptor N-terminal-interacting protein</fullName>
    </alternativeName>
    <alternativeName>
        <fullName>CH-rich-interacting match with PLAG1</fullName>
    </alternativeName>
    <alternativeName>
        <fullName>E3 ubiquitin-protein ligase Pirh2</fullName>
    </alternativeName>
    <alternativeName>
        <fullName>RING finger protein 199</fullName>
    </alternativeName>
    <alternativeName>
        <fullName>RING-type E3 ubiquitin transferase RCHY1</fullName>
    </alternativeName>
    <alternativeName>
        <fullName>Zinc finger protein 363</fullName>
    </alternativeName>
    <alternativeName>
        <fullName evidence="17">p53-induced RING-H2 protein</fullName>
        <shortName evidence="16">hPirh2</shortName>
    </alternativeName>
</protein>
<evidence type="ECO:0000255" key="1">
    <source>
        <dbReference type="PROSITE-ProRule" id="PRU00175"/>
    </source>
</evidence>
<evidence type="ECO:0000255" key="2">
    <source>
        <dbReference type="PROSITE-ProRule" id="PRU00601"/>
    </source>
</evidence>
<evidence type="ECO:0000255" key="3">
    <source>
        <dbReference type="PROSITE-ProRule" id="PRU00965"/>
    </source>
</evidence>
<evidence type="ECO:0000269" key="4">
    <source>
    </source>
</evidence>
<evidence type="ECO:0000269" key="5">
    <source>
    </source>
</evidence>
<evidence type="ECO:0000269" key="6">
    <source>
    </source>
</evidence>
<evidence type="ECO:0000269" key="7">
    <source>
    </source>
</evidence>
<evidence type="ECO:0000269" key="8">
    <source>
    </source>
</evidence>
<evidence type="ECO:0000269" key="9">
    <source>
    </source>
</evidence>
<evidence type="ECO:0000269" key="10">
    <source>
    </source>
</evidence>
<evidence type="ECO:0000269" key="11">
    <source>
    </source>
</evidence>
<evidence type="ECO:0000269" key="12">
    <source>
    </source>
</evidence>
<evidence type="ECO:0000269" key="13">
    <source>
    </source>
</evidence>
<evidence type="ECO:0000269" key="14">
    <source>
    </source>
</evidence>
<evidence type="ECO:0000269" key="15">
    <source>
    </source>
</evidence>
<evidence type="ECO:0000303" key="16">
    <source>
    </source>
</evidence>
<evidence type="ECO:0000303" key="17">
    <source>
    </source>
</evidence>
<evidence type="ECO:0000303" key="18">
    <source>
    </source>
</evidence>
<evidence type="ECO:0000303" key="19">
    <source>
    </source>
</evidence>
<evidence type="ECO:0000305" key="20"/>
<evidence type="ECO:0007744" key="21">
    <source>
    </source>
</evidence>
<evidence type="ECO:0007744" key="22">
    <source>
    </source>
</evidence>
<evidence type="ECO:0007829" key="23">
    <source>
        <dbReference type="PDB" id="2JRJ"/>
    </source>
</evidence>
<evidence type="ECO:0007829" key="24">
    <source>
        <dbReference type="PDB" id="2K2D"/>
    </source>
</evidence>
<evidence type="ECO:0007829" key="25">
    <source>
        <dbReference type="PDB" id="7YNX"/>
    </source>
</evidence>
<name>ZN363_HUMAN</name>
<comment type="function">
    <text evidence="6 7 9 10 11 13 14 15">E3 ubiquitin-protein ligase that mediates ubiquitination of target proteins, including p53/TP53, TP73, HDAC1 and CDKN1B (PubMed:16914734, PubMed:17721809, PubMed:18006823, PubMed:19043414, PubMed:19483087, PubMed:21994467). Mediates ubiquitination and degradation of p53/TP53; preferentially acts on tetrameric p53/TP53 (PubMed:19043414, PubMed:19483087). Catalyzes monoubiquitinates the translesion DNA polymerase POLH (PubMed:21791603). Involved in the ribosome-associated quality control (RQC) pathway, which mediates the extraction of incompletely synthesized nascent chains from stalled ribosomes: RCHY1 acts downstream of NEMF and recognizes CAT tails associated with stalled nascent chains, leading to their ubiquitination and degradation (PubMed:33909987).</text>
</comment>
<comment type="function">
    <molecule>Isoform 4</molecule>
    <text evidence="12">Has no E3 ubiquitin-protein ligase activity.</text>
</comment>
<comment type="catalytic activity">
    <reaction evidence="10 11 15">
        <text>S-ubiquitinyl-[E2 ubiquitin-conjugating enzyme]-L-cysteine + [acceptor protein]-L-lysine = [E2 ubiquitin-conjugating enzyme]-L-cysteine + N(6)-ubiquitinyl-[acceptor protein]-L-lysine.</text>
        <dbReference type="EC" id="2.3.2.27"/>
    </reaction>
</comment>
<comment type="pathway">
    <text evidence="6 7 9 10 11 14 15">Protein modification; protein ubiquitination.</text>
</comment>
<comment type="subunit">
    <text evidence="4 5 6 7 8 10 11">Monomer and homodimer. Interacts with AR, MDM2, KAT5, PLAG1, PLAGL2, COPE, UBE2D2 and GORAB/NTKLBP1.</text>
</comment>
<comment type="interaction">
    <interactant intactId="EBI-947779">
        <id>Q96PM5</id>
    </interactant>
    <interactant intactId="EBI-10173507">
        <id>Q6UY14-3</id>
        <label>ADAMTSL4</label>
    </interactant>
    <organismsDiffer>false</organismsDiffer>
    <experiments>3</experiments>
</comment>
<comment type="interaction">
    <interactant intactId="EBI-947779">
        <id>Q96PM5</id>
    </interactant>
    <interactant intactId="EBI-3942989">
        <id>Q9NVV5</id>
        <label>AIG1</label>
    </interactant>
    <organismsDiffer>false</organismsDiffer>
    <experiments>4</experiments>
</comment>
<comment type="interaction">
    <interactant intactId="EBI-947779">
        <id>Q96PM5</id>
    </interactant>
    <interactant intactId="EBI-3943039">
        <id>Q6UXH0</id>
        <label>ANGPTL8</label>
    </interactant>
    <organismsDiffer>false</organismsDiffer>
    <experiments>2</experiments>
</comment>
<comment type="interaction">
    <interactant intactId="EBI-947779">
        <id>Q96PM5</id>
    </interactant>
    <interactant intactId="EBI-1237085">
        <id>P18085</id>
        <label>ARF4</label>
    </interactant>
    <organismsDiffer>false</organismsDiffer>
    <experiments>3</experiments>
</comment>
<comment type="interaction">
    <interactant intactId="EBI-947779">
        <id>Q96PM5</id>
    </interactant>
    <interactant intactId="EBI-397435">
        <id>P62158</id>
        <label>CALM3</label>
    </interactant>
    <organismsDiffer>false</organismsDiffer>
    <experiments>2</experiments>
</comment>
<comment type="interaction">
    <interactant intactId="EBI-947779">
        <id>Q96PM5</id>
    </interactant>
    <interactant intactId="EBI-351018">
        <id>Q13557</id>
        <label>CAMK2D</label>
    </interactant>
    <organismsDiffer>false</organismsDiffer>
    <experiments>2</experiments>
</comment>
<comment type="interaction">
    <interactant intactId="EBI-947779">
        <id>Q96PM5</id>
    </interactant>
    <interactant intactId="EBI-10192698">
        <id>Q02930-3</id>
        <label>CREB5</label>
    </interactant>
    <organismsDiffer>false</organismsDiffer>
    <experiments>3</experiments>
</comment>
<comment type="interaction">
    <interactant intactId="EBI-947779">
        <id>Q96PM5</id>
    </interactant>
    <interactant intactId="EBI-3915012">
        <id>P04196</id>
        <label>HRG</label>
    </interactant>
    <organismsDiffer>false</organismsDiffer>
    <experiments>3</experiments>
</comment>
<comment type="interaction">
    <interactant intactId="EBI-947779">
        <id>Q96PM5</id>
    </interactant>
    <interactant intactId="EBI-5353084">
        <id>O60662</id>
        <label>KLHL41</label>
    </interactant>
    <organismsDiffer>false</organismsDiffer>
    <experiments>6</experiments>
</comment>
<comment type="interaction">
    <interactant intactId="EBI-947779">
        <id>Q96PM5</id>
    </interactant>
    <interactant intactId="EBI-1044640">
        <id>Q9BYQ4</id>
        <label>KRTAP9-2</label>
    </interactant>
    <organismsDiffer>false</organismsDiffer>
    <experiments>3</experiments>
</comment>
<comment type="interaction">
    <interactant intactId="EBI-947779">
        <id>Q96PM5</id>
    </interactant>
    <interactant intactId="EBI-10257651">
        <id>Q7Z4I7-5</id>
        <label>LIMS2</label>
    </interactant>
    <organismsDiffer>false</organismsDiffer>
    <experiments>3</experiments>
</comment>
<comment type="interaction">
    <interactant intactId="EBI-947779">
        <id>Q96PM5</id>
    </interactant>
    <interactant intactId="EBI-748397">
        <id>P50222</id>
        <label>MEOX2</label>
    </interactant>
    <organismsDiffer>false</organismsDiffer>
    <experiments>3</experiments>
</comment>
<comment type="interaction">
    <interactant intactId="EBI-947779">
        <id>Q96PM5</id>
    </interactant>
    <interactant intactId="EBI-1538629">
        <id>Q969F2</id>
        <label>NKD2</label>
    </interactant>
    <organismsDiffer>false</organismsDiffer>
    <experiments>2</experiments>
</comment>
<comment type="interaction">
    <interactant intactId="EBI-947779">
        <id>Q96PM5</id>
    </interactant>
    <interactant intactId="EBI-366978">
        <id>Q9UBE8</id>
        <label>NLK</label>
    </interactant>
    <organismsDiffer>false</organismsDiffer>
    <experiments>5</experiments>
</comment>
<comment type="interaction">
    <interactant intactId="EBI-947779">
        <id>Q96PM5</id>
    </interactant>
    <interactant intactId="EBI-945833">
        <id>Q7Z3S9</id>
        <label>NOTCH2NLA</label>
    </interactant>
    <organismsDiffer>false</organismsDiffer>
    <experiments>4</experiments>
</comment>
<comment type="interaction">
    <interactant intactId="EBI-947779">
        <id>Q96PM5</id>
    </interactant>
    <interactant intactId="EBI-10303490">
        <id>Q9C0C4</id>
        <label>SEMA4C</label>
    </interactant>
    <organismsDiffer>false</organismsDiffer>
    <experiments>3</experiments>
</comment>
<comment type="interaction">
    <interactant intactId="EBI-947779">
        <id>Q96PM5</id>
    </interactant>
    <interactant intactId="EBI-5235340">
        <id>Q7Z699</id>
        <label>SPRED1</label>
    </interactant>
    <organismsDiffer>false</organismsDiffer>
    <experiments>3</experiments>
</comment>
<comment type="interaction">
    <interactant intactId="EBI-947779">
        <id>Q96PM5</id>
    </interactant>
    <interactant intactId="EBI-366083">
        <id>P04637</id>
        <label>TP53</label>
    </interactant>
    <organismsDiffer>false</organismsDiffer>
    <experiments>13</experiments>
</comment>
<comment type="interaction">
    <interactant intactId="EBI-947779">
        <id>Q96PM5</id>
    </interactant>
    <interactant intactId="EBI-1380492">
        <id>Q8TF42</id>
        <label>UBASH3B</label>
    </interactant>
    <organismsDiffer>false</organismsDiffer>
    <experiments>8</experiments>
</comment>
<comment type="interaction">
    <interactant intactId="EBI-947779">
        <id>Q96PM5</id>
    </interactant>
    <interactant intactId="EBI-722366">
        <id>Q6RFH5</id>
        <label>WDR74</label>
    </interactant>
    <organismsDiffer>false</organismsDiffer>
    <experiments>3</experiments>
</comment>
<comment type="interaction">
    <interactant intactId="EBI-947779">
        <id>Q96PM5</id>
    </interactant>
    <interactant intactId="EBI-25592237">
        <id>PRO_0000422441</id>
        <label>rep</label>
        <dbReference type="UniProtKB" id="K9N7C7"/>
    </interactant>
    <organismsDiffer>true</organismsDiffer>
    <experiments>2</experiments>
</comment>
<comment type="interaction">
    <interactant intactId="EBI-947779">
        <id>Q96PM5</id>
    </interactant>
    <interactant intactId="EBI-25622115">
        <id>PRO_0000283876</id>
        <label>rep</label>
        <dbReference type="UniProtKB" id="P0C6X5"/>
    </interactant>
    <organismsDiffer>true</organismsDiffer>
    <experiments>2</experiments>
</comment>
<comment type="interaction">
    <interactant intactId="EBI-947779">
        <id>Q96PM5</id>
    </interactant>
    <interactant intactId="EBI-25474079">
        <id>PRO_0000037311</id>
        <label>rep</label>
        <dbReference type="UniProtKB" id="P0C6X7"/>
    </interactant>
    <organismsDiffer>true</organismsDiffer>
    <experiments>9</experiments>
</comment>
<comment type="interaction">
    <interactant intactId="EBI-21252376">
        <id>Q96PM5-4</id>
    </interactant>
    <interactant intactId="EBI-10976677">
        <id>G5E9A7</id>
        <label>DMWD</label>
    </interactant>
    <organismsDiffer>false</organismsDiffer>
    <experiments>3</experiments>
</comment>
<comment type="interaction">
    <interactant intactId="EBI-21252376">
        <id>Q96PM5-4</id>
    </interactant>
    <interactant intactId="EBI-747754">
        <id>P28799</id>
        <label>GRN</label>
    </interactant>
    <organismsDiffer>false</organismsDiffer>
    <experiments>3</experiments>
</comment>
<comment type="interaction">
    <interactant intactId="EBI-21252376">
        <id>Q96PM5-4</id>
    </interactant>
    <interactant intactId="EBI-7133736">
        <id>P07686</id>
        <label>HEXB</label>
    </interactant>
    <organismsDiffer>false</organismsDiffer>
    <experiments>3</experiments>
</comment>
<comment type="interaction">
    <interactant intactId="EBI-21252376">
        <id>Q96PM5-4</id>
    </interactant>
    <interactant intactId="EBI-1055254">
        <id>Q8WXH2</id>
        <label>JPH3</label>
    </interactant>
    <organismsDiffer>false</organismsDiffer>
    <experiments>3</experiments>
</comment>
<comment type="interaction">
    <interactant intactId="EBI-21252376">
        <id>Q96PM5-4</id>
    </interactant>
    <interactant intactId="EBI-5235340">
        <id>Q7Z699</id>
        <label>SPRED1</label>
    </interactant>
    <organismsDiffer>false</organismsDiffer>
    <experiments>3</experiments>
</comment>
<comment type="subcellular location">
    <subcellularLocation>
        <location evidence="6 9 11">Nucleus</location>
    </subcellularLocation>
    <subcellularLocation>
        <location evidence="4">Nucleus speckle</location>
    </subcellularLocation>
    <subcellularLocation>
        <location evidence="5 9">Cytoplasm</location>
    </subcellularLocation>
</comment>
<comment type="alternative products">
    <event type="alternative splicing"/>
    <isoform>
        <id>Q96PM5-1</id>
        <name>1</name>
        <name>A</name>
        <sequence type="displayed"/>
    </isoform>
    <isoform>
        <id>Q96PM5-2</id>
        <name>2</name>
        <name>B</name>
        <sequence type="described" ref="VSP_038467"/>
    </isoform>
    <isoform>
        <id>Q96PM5-3</id>
        <name>3</name>
        <name>C</name>
        <sequence type="described" ref="VSP_038468"/>
    </isoform>
    <isoform>
        <id>Q96PM5-4</id>
        <name>4</name>
        <name evidence="19">Pirh2b</name>
        <sequence type="described" ref="VSP_044085"/>
    </isoform>
    <isoform>
        <id>Q96PM5-5</id>
        <name>5</name>
        <name evidence="18">Pirh2D</name>
        <sequence type="described" ref="VSP_053385 VSP_053386"/>
    </isoform>
    <isoform>
        <id>Q96PM5-6</id>
        <name>6</name>
        <sequence type="described" ref="VSP_053787"/>
    </isoform>
    <isoform>
        <id>Q96PM5-7</id>
        <name>7</name>
        <sequence type="described" ref="VSP_053788"/>
    </isoform>
    <isoform>
        <id>Q96PM5-8</id>
        <name>8</name>
        <sequence type="described" ref="VSP_053788 VSP_038467"/>
    </isoform>
</comment>
<comment type="induction">
    <text evidence="9">Up-regulated during the S phase of the cell cycle (PubMed:18006823). Expressed at low levels during G phase (PubMed:18006823).</text>
</comment>
<comment type="induction">
    <molecule>Isoform 4</molecule>
    <text evidence="12">Down-regulated in hepatocellular carcinoma.</text>
</comment>
<comment type="PTM">
    <text evidence="4 11">Subject to ubiquitination and proteasomal degradation. Interaction with PLAGL2 or KAT5 enhances protein stability.</text>
</comment>
<comment type="miscellaneous">
    <molecule>Isoform 7</molecule>
    <text evidence="20">Gene prediction based on partial mRNA data.</text>
</comment>
<comment type="sequence caution" evidence="20">
    <conflict type="erroneous initiation">
        <sequence resource="EMBL-CDS" id="BAD92309"/>
    </conflict>
    <text>Extended N-terminus.</text>
</comment>
<comment type="online information" name="Atlas of Genetics and Cytogenetics in Oncology and Haematology">
    <link uri="https://atlasgeneticsoncology.org/gene/43012/RCHY1"/>
</comment>
<dbReference type="EC" id="2.3.2.27" evidence="10 11 15"/>
<dbReference type="EMBL" id="GQ250944">
    <property type="protein sequence ID" value="ACT35531.1"/>
    <property type="molecule type" value="mRNA"/>
</dbReference>
<dbReference type="EMBL" id="GQ250945">
    <property type="protein sequence ID" value="ACT35532.1"/>
    <property type="molecule type" value="mRNA"/>
</dbReference>
<dbReference type="EMBL" id="GQ250946">
    <property type="protein sequence ID" value="ACT35533.1"/>
    <property type="molecule type" value="mRNA"/>
</dbReference>
<dbReference type="EMBL" id="AF247041">
    <property type="protein sequence ID" value="AAL76101.1"/>
    <property type="molecule type" value="mRNA"/>
</dbReference>
<dbReference type="EMBL" id="AF255666">
    <property type="protein sequence ID" value="AAK96896.1"/>
    <property type="molecule type" value="mRNA"/>
</dbReference>
<dbReference type="EMBL" id="AF305424">
    <property type="protein sequence ID" value="AAL09356.1"/>
    <property type="molecule type" value="mRNA"/>
</dbReference>
<dbReference type="EMBL" id="AB209072">
    <property type="protein sequence ID" value="BAD92309.1"/>
    <property type="status" value="ALT_INIT"/>
    <property type="molecule type" value="mRNA"/>
</dbReference>
<dbReference type="EMBL" id="AY888047">
    <property type="protein sequence ID" value="AAX78233.1"/>
    <property type="molecule type" value="mRNA"/>
</dbReference>
<dbReference type="EMBL" id="GU937000">
    <property type="protein sequence ID" value="ADD21555.1"/>
    <property type="molecule type" value="mRNA"/>
</dbReference>
<dbReference type="EMBL" id="AK091501">
    <property type="protein sequence ID" value="BAG52375.1"/>
    <property type="molecule type" value="mRNA"/>
</dbReference>
<dbReference type="EMBL" id="AC096759">
    <property type="status" value="NOT_ANNOTATED_CDS"/>
    <property type="molecule type" value="Genomic_DNA"/>
</dbReference>
<dbReference type="EMBL" id="CH471057">
    <property type="protein sequence ID" value="EAX05725.1"/>
    <property type="molecule type" value="Genomic_DNA"/>
</dbReference>
<dbReference type="EMBL" id="BC047393">
    <property type="protein sequence ID" value="AAH47393.1"/>
    <property type="molecule type" value="mRNA"/>
</dbReference>
<dbReference type="CCDS" id="CCDS34012.1">
    <molecule id="Q96PM5-2"/>
</dbReference>
<dbReference type="CCDS" id="CCDS3567.1">
    <molecule id="Q96PM5-1"/>
</dbReference>
<dbReference type="CCDS" id="CCDS63990.1">
    <molecule id="Q96PM5-8"/>
</dbReference>
<dbReference type="CCDS" id="CCDS63991.1">
    <molecule id="Q96PM5-7"/>
</dbReference>
<dbReference type="CCDS" id="CCDS63992.1">
    <molecule id="Q96PM5-6"/>
</dbReference>
<dbReference type="RefSeq" id="NP_001009922.1">
    <molecule id="Q96PM5-2"/>
    <property type="nucleotide sequence ID" value="NM_001009922.3"/>
</dbReference>
<dbReference type="RefSeq" id="NP_001265465.1">
    <molecule id="Q96PM5-7"/>
    <property type="nucleotide sequence ID" value="NM_001278536.2"/>
</dbReference>
<dbReference type="RefSeq" id="NP_001265466.1">
    <molecule id="Q96PM5-8"/>
    <property type="nucleotide sequence ID" value="NM_001278537.2"/>
</dbReference>
<dbReference type="RefSeq" id="NP_001265467.1">
    <molecule id="Q96PM5-6"/>
    <property type="nucleotide sequence ID" value="NM_001278538.2"/>
</dbReference>
<dbReference type="RefSeq" id="NP_056251.2">
    <molecule id="Q96PM5-1"/>
    <property type="nucleotide sequence ID" value="NM_015436.4"/>
</dbReference>
<dbReference type="PDB" id="2JRJ">
    <property type="method" value="NMR"/>
    <property type="chains" value="A=138-189"/>
</dbReference>
<dbReference type="PDB" id="2K2C">
    <property type="method" value="NMR"/>
    <property type="chains" value="A=1-137"/>
</dbReference>
<dbReference type="PDB" id="2K2D">
    <property type="method" value="NMR"/>
    <property type="chains" value="A=187-261"/>
</dbReference>
<dbReference type="PDB" id="7YNX">
    <property type="method" value="X-ray"/>
    <property type="resolution" value="2.30 A"/>
    <property type="chains" value="A/B=1-191"/>
</dbReference>
<dbReference type="PDBsum" id="2JRJ"/>
<dbReference type="PDBsum" id="2K2C"/>
<dbReference type="PDBsum" id="2K2D"/>
<dbReference type="PDBsum" id="7YNX"/>
<dbReference type="BMRB" id="Q96PM5"/>
<dbReference type="SMR" id="Q96PM5"/>
<dbReference type="BioGRID" id="117406">
    <property type="interactions" value="330"/>
</dbReference>
<dbReference type="CORUM" id="Q96PM5"/>
<dbReference type="DIP" id="DIP-43981N"/>
<dbReference type="FunCoup" id="Q96PM5">
    <property type="interactions" value="3209"/>
</dbReference>
<dbReference type="IntAct" id="Q96PM5">
    <property type="interactions" value="69"/>
</dbReference>
<dbReference type="MINT" id="Q96PM5"/>
<dbReference type="STRING" id="9606.ENSP00000321239"/>
<dbReference type="iPTMnet" id="Q96PM5"/>
<dbReference type="PhosphoSitePlus" id="Q96PM5"/>
<dbReference type="BioMuta" id="RCHY1"/>
<dbReference type="DMDM" id="32700008"/>
<dbReference type="REPRODUCTION-2DPAGE" id="Q96PM5"/>
<dbReference type="jPOST" id="Q96PM5"/>
<dbReference type="MassIVE" id="Q96PM5"/>
<dbReference type="PaxDb" id="9606-ENSP00000321239"/>
<dbReference type="PeptideAtlas" id="Q96PM5"/>
<dbReference type="ProteomicsDB" id="16915"/>
<dbReference type="ProteomicsDB" id="18304"/>
<dbReference type="ProteomicsDB" id="61327"/>
<dbReference type="ProteomicsDB" id="77709">
    <molecule id="Q96PM5-1"/>
</dbReference>
<dbReference type="ProteomicsDB" id="77710">
    <molecule id="Q96PM5-2"/>
</dbReference>
<dbReference type="ProteomicsDB" id="77711">
    <molecule id="Q96PM5-3"/>
</dbReference>
<dbReference type="Pumba" id="Q96PM5"/>
<dbReference type="Antibodypedia" id="24650">
    <property type="antibodies" value="198 antibodies from 35 providers"/>
</dbReference>
<dbReference type="DNASU" id="25898"/>
<dbReference type="Ensembl" id="ENST00000324439.10">
    <molecule id="Q96PM5-1"/>
    <property type="protein sequence ID" value="ENSP00000321239.5"/>
    <property type="gene ID" value="ENSG00000163743.14"/>
</dbReference>
<dbReference type="Ensembl" id="ENST00000380840.6">
    <molecule id="Q96PM5-7"/>
    <property type="protein sequence ID" value="ENSP00000370220.2"/>
    <property type="gene ID" value="ENSG00000163743.14"/>
</dbReference>
<dbReference type="Ensembl" id="ENST00000505105.5">
    <molecule id="Q96PM5-4"/>
    <property type="protein sequence ID" value="ENSP00000424631.1"/>
    <property type="gene ID" value="ENSG00000163743.14"/>
</dbReference>
<dbReference type="Ensembl" id="ENST00000507014.1">
    <molecule id="Q96PM5-8"/>
    <property type="protein sequence ID" value="ENSP00000424472.1"/>
    <property type="gene ID" value="ENSG00000163743.14"/>
</dbReference>
<dbReference type="Ensembl" id="ENST00000512706.5">
    <molecule id="Q96PM5-6"/>
    <property type="protein sequence ID" value="ENSP00000423976.1"/>
    <property type="gene ID" value="ENSG00000163743.14"/>
</dbReference>
<dbReference type="Ensembl" id="ENST00000513257.5">
    <molecule id="Q96PM5-2"/>
    <property type="protein sequence ID" value="ENSP00000421084.1"/>
    <property type="gene ID" value="ENSG00000163743.14"/>
</dbReference>
<dbReference type="GeneID" id="25898"/>
<dbReference type="KEGG" id="hsa:25898"/>
<dbReference type="MANE-Select" id="ENST00000324439.10">
    <property type="protein sequence ID" value="ENSP00000321239.5"/>
    <property type="RefSeq nucleotide sequence ID" value="NM_015436.4"/>
    <property type="RefSeq protein sequence ID" value="NP_056251.2"/>
</dbReference>
<dbReference type="UCSC" id="uc003hik.4">
    <molecule id="Q96PM5-1"/>
    <property type="organism name" value="human"/>
</dbReference>
<dbReference type="AGR" id="HGNC:17479"/>
<dbReference type="CTD" id="25898"/>
<dbReference type="DisGeNET" id="25898"/>
<dbReference type="GeneCards" id="RCHY1"/>
<dbReference type="HGNC" id="HGNC:17479">
    <property type="gene designation" value="RCHY1"/>
</dbReference>
<dbReference type="HPA" id="ENSG00000163743">
    <property type="expression patterns" value="Low tissue specificity"/>
</dbReference>
<dbReference type="MIM" id="607680">
    <property type="type" value="gene"/>
</dbReference>
<dbReference type="neXtProt" id="NX_Q96PM5"/>
<dbReference type="OpenTargets" id="ENSG00000163743"/>
<dbReference type="PharmGKB" id="PA38240"/>
<dbReference type="VEuPathDB" id="HostDB:ENSG00000163743"/>
<dbReference type="eggNOG" id="KOG1940">
    <property type="taxonomic scope" value="Eukaryota"/>
</dbReference>
<dbReference type="GeneTree" id="ENSGT00390000008853"/>
<dbReference type="HOGENOM" id="CLU_013368_3_0_1"/>
<dbReference type="InParanoid" id="Q96PM5"/>
<dbReference type="OMA" id="KLYPCRL"/>
<dbReference type="OrthoDB" id="411372at2759"/>
<dbReference type="PAN-GO" id="Q96PM5">
    <property type="GO annotations" value="4 GO annotations based on evolutionary models"/>
</dbReference>
<dbReference type="PhylomeDB" id="Q96PM5"/>
<dbReference type="TreeFam" id="TF323762"/>
<dbReference type="BRENDA" id="2.3.2.27">
    <property type="organism ID" value="2681"/>
</dbReference>
<dbReference type="PathwayCommons" id="Q96PM5"/>
<dbReference type="Reactome" id="R-HSA-110320">
    <property type="pathway name" value="Translesion Synthesis by POLH"/>
</dbReference>
<dbReference type="Reactome" id="R-HSA-983168">
    <property type="pathway name" value="Antigen processing: Ubiquitination &amp; Proteasome degradation"/>
</dbReference>
<dbReference type="SignaLink" id="Q96PM5"/>
<dbReference type="SIGNOR" id="Q96PM5"/>
<dbReference type="UniPathway" id="UPA00143"/>
<dbReference type="BioGRID-ORCS" id="25898">
    <property type="hits" value="15 hits in 1208 CRISPR screens"/>
</dbReference>
<dbReference type="ChiTaRS" id="RCHY1">
    <property type="organism name" value="human"/>
</dbReference>
<dbReference type="EvolutionaryTrace" id="Q96PM5"/>
<dbReference type="GeneWiki" id="RCHY1"/>
<dbReference type="GenomeRNAi" id="25898"/>
<dbReference type="Pharos" id="Q96PM5">
    <property type="development level" value="Tbio"/>
</dbReference>
<dbReference type="PRO" id="PR:Q96PM5"/>
<dbReference type="Proteomes" id="UP000005640">
    <property type="component" value="Chromosome 4"/>
</dbReference>
<dbReference type="RNAct" id="Q96PM5">
    <property type="molecule type" value="protein"/>
</dbReference>
<dbReference type="Bgee" id="ENSG00000163743">
    <property type="expression patterns" value="Expressed in sperm and 216 other cell types or tissues"/>
</dbReference>
<dbReference type="ExpressionAtlas" id="Q96PM5">
    <property type="expression patterns" value="baseline and differential"/>
</dbReference>
<dbReference type="GO" id="GO:0005737">
    <property type="term" value="C:cytoplasm"/>
    <property type="evidence" value="ECO:0000314"/>
    <property type="project" value="HGNC-UCL"/>
</dbReference>
<dbReference type="GO" id="GO:0005829">
    <property type="term" value="C:cytosol"/>
    <property type="evidence" value="ECO:0000314"/>
    <property type="project" value="HPA"/>
</dbReference>
<dbReference type="GO" id="GO:0043231">
    <property type="term" value="C:intracellular membrane-bounded organelle"/>
    <property type="evidence" value="ECO:0000314"/>
    <property type="project" value="HPA"/>
</dbReference>
<dbReference type="GO" id="GO:0016607">
    <property type="term" value="C:nuclear speck"/>
    <property type="evidence" value="ECO:0007669"/>
    <property type="project" value="UniProtKB-SubCell"/>
</dbReference>
<dbReference type="GO" id="GO:0005654">
    <property type="term" value="C:nucleoplasm"/>
    <property type="evidence" value="ECO:0000314"/>
    <property type="project" value="HPA"/>
</dbReference>
<dbReference type="GO" id="GO:0005634">
    <property type="term" value="C:nucleus"/>
    <property type="evidence" value="ECO:0000314"/>
    <property type="project" value="UniProtKB"/>
</dbReference>
<dbReference type="GO" id="GO:0000151">
    <property type="term" value="C:ubiquitin ligase complex"/>
    <property type="evidence" value="ECO:0000314"/>
    <property type="project" value="UniProtKB"/>
</dbReference>
<dbReference type="GO" id="GO:0002039">
    <property type="term" value="F:p53 binding"/>
    <property type="evidence" value="ECO:0000353"/>
    <property type="project" value="UniProtKB"/>
</dbReference>
<dbReference type="GO" id="GO:0042803">
    <property type="term" value="F:protein homodimerization activity"/>
    <property type="evidence" value="ECO:0000353"/>
    <property type="project" value="UniProtKB"/>
</dbReference>
<dbReference type="GO" id="GO:0061630">
    <property type="term" value="F:ubiquitin protein ligase activity"/>
    <property type="evidence" value="ECO:0000314"/>
    <property type="project" value="UniProtKB"/>
</dbReference>
<dbReference type="GO" id="GO:0004842">
    <property type="term" value="F:ubiquitin-protein transferase activity"/>
    <property type="evidence" value="ECO:0000304"/>
    <property type="project" value="Reactome"/>
</dbReference>
<dbReference type="GO" id="GO:0008270">
    <property type="term" value="F:zinc ion binding"/>
    <property type="evidence" value="ECO:0000314"/>
    <property type="project" value="UniProtKB"/>
</dbReference>
<dbReference type="GO" id="GO:0070987">
    <property type="term" value="P:error-free translesion synthesis"/>
    <property type="evidence" value="ECO:0000304"/>
    <property type="project" value="Reactome"/>
</dbReference>
<dbReference type="GO" id="GO:0032436">
    <property type="term" value="P:positive regulation of proteasomal ubiquitin-dependent protein catabolic process"/>
    <property type="evidence" value="ECO:0000314"/>
    <property type="project" value="UniProtKB"/>
</dbReference>
<dbReference type="GO" id="GO:0031398">
    <property type="term" value="P:positive regulation of protein ubiquitination"/>
    <property type="evidence" value="ECO:0000314"/>
    <property type="project" value="UniProtKB"/>
</dbReference>
<dbReference type="GO" id="GO:0051865">
    <property type="term" value="P:protein autoubiquitination"/>
    <property type="evidence" value="ECO:0000314"/>
    <property type="project" value="UniProtKB"/>
</dbReference>
<dbReference type="GO" id="GO:0016567">
    <property type="term" value="P:protein ubiquitination"/>
    <property type="evidence" value="ECO:0000314"/>
    <property type="project" value="UniProtKB"/>
</dbReference>
<dbReference type="GO" id="GO:0072344">
    <property type="term" value="P:rescue of stalled ribosome"/>
    <property type="evidence" value="ECO:0000314"/>
    <property type="project" value="UniProtKB"/>
</dbReference>
<dbReference type="GO" id="GO:0006511">
    <property type="term" value="P:ubiquitin-dependent protein catabolic process"/>
    <property type="evidence" value="ECO:0000314"/>
    <property type="project" value="UniProtKB"/>
</dbReference>
<dbReference type="CDD" id="cd16464">
    <property type="entry name" value="RING-H2_Pirh2-like"/>
    <property type="match status" value="1"/>
</dbReference>
<dbReference type="DisProt" id="DP02587"/>
<dbReference type="FunFam" id="2.20.28.10:FF:000009">
    <property type="entry name" value="RING finger and CHY zinc finger domain-containing protein 1"/>
    <property type="match status" value="1"/>
</dbReference>
<dbReference type="FunFam" id="3.30.40.10:FF:000188">
    <property type="entry name" value="RING finger and CHY zinc finger domain-containing protein 1"/>
    <property type="match status" value="1"/>
</dbReference>
<dbReference type="Gene3D" id="2.20.28.10">
    <property type="match status" value="1"/>
</dbReference>
<dbReference type="Gene3D" id="3.30.40.10">
    <property type="entry name" value="Zinc/RING finger domain, C3HC4 (zinc finger)"/>
    <property type="match status" value="1"/>
</dbReference>
<dbReference type="InterPro" id="IPR039512">
    <property type="entry name" value="RCHY1_zinc-ribbon"/>
</dbReference>
<dbReference type="InterPro" id="IPR008913">
    <property type="entry name" value="Znf_CHY"/>
</dbReference>
<dbReference type="InterPro" id="IPR037274">
    <property type="entry name" value="Znf_CHY_sf"/>
</dbReference>
<dbReference type="InterPro" id="IPR017921">
    <property type="entry name" value="Znf_CTCHY"/>
</dbReference>
<dbReference type="InterPro" id="IPR037275">
    <property type="entry name" value="Znf_CTCHY_sf"/>
</dbReference>
<dbReference type="InterPro" id="IPR001841">
    <property type="entry name" value="Znf_RING"/>
</dbReference>
<dbReference type="InterPro" id="IPR013083">
    <property type="entry name" value="Znf_RING/FYVE/PHD"/>
</dbReference>
<dbReference type="PANTHER" id="PTHR21319">
    <property type="entry name" value="RING FINGER AND CHY ZINC FINGER DOMAIN-CONTAINING PROTEIN 1"/>
    <property type="match status" value="1"/>
</dbReference>
<dbReference type="PANTHER" id="PTHR21319:SF53">
    <property type="entry name" value="RING FINGER AND CHY ZINC FINGER DOMAIN-CONTAINING PROTEIN 1"/>
    <property type="match status" value="1"/>
</dbReference>
<dbReference type="Pfam" id="PF05495">
    <property type="entry name" value="zf-CHY"/>
    <property type="match status" value="1"/>
</dbReference>
<dbReference type="Pfam" id="PF13639">
    <property type="entry name" value="zf-RING_2"/>
    <property type="match status" value="1"/>
</dbReference>
<dbReference type="Pfam" id="PF14599">
    <property type="entry name" value="zinc_ribbon_6"/>
    <property type="match status" value="1"/>
</dbReference>
<dbReference type="SMART" id="SM00184">
    <property type="entry name" value="RING"/>
    <property type="match status" value="1"/>
</dbReference>
<dbReference type="SUPFAM" id="SSF161219">
    <property type="entry name" value="CHY zinc finger-like"/>
    <property type="match status" value="1"/>
</dbReference>
<dbReference type="SUPFAM" id="SSF57850">
    <property type="entry name" value="RING/U-box"/>
    <property type="match status" value="1"/>
</dbReference>
<dbReference type="SUPFAM" id="SSF161245">
    <property type="entry name" value="Zinc hairpin stack"/>
    <property type="match status" value="1"/>
</dbReference>
<dbReference type="PROSITE" id="PS51266">
    <property type="entry name" value="ZF_CHY"/>
    <property type="match status" value="1"/>
</dbReference>
<dbReference type="PROSITE" id="PS51270">
    <property type="entry name" value="ZF_CTCHY"/>
    <property type="match status" value="1"/>
</dbReference>
<dbReference type="PROSITE" id="PS50089">
    <property type="entry name" value="ZF_RING_2"/>
    <property type="match status" value="1"/>
</dbReference>
<proteinExistence type="evidence at protein level"/>
<gene>
    <name type="primary">RCHY1</name>
    <name type="synonym">ARNIP</name>
    <name type="synonym">CHIMP</name>
    <name evidence="17" type="synonym">PIRH2</name>
    <name type="synonym">RNF199</name>
    <name type="synonym">ZNF363</name>
</gene>
<accession>Q96PM5</accession>
<accession>B3KRG3</accession>
<accession>C7E541</accession>
<accession>C7E542</accession>
<accession>C7E543</accession>
<accession>D3YRV2</accession>
<accession>E7EMC8</accession>
<accession>E7ETW5</accession>
<accession>J3KPI0</accession>
<accession>Q2KN33</accession>
<accession>Q59GN7</accession>
<accession>Q86X26</accession>
<accession>Q96PR5</accession>
<organism>
    <name type="scientific">Homo sapiens</name>
    <name type="common">Human</name>
    <dbReference type="NCBI Taxonomy" id="9606"/>
    <lineage>
        <taxon>Eukaryota</taxon>
        <taxon>Metazoa</taxon>
        <taxon>Chordata</taxon>
        <taxon>Craniata</taxon>
        <taxon>Vertebrata</taxon>
        <taxon>Euteleostomi</taxon>
        <taxon>Mammalia</taxon>
        <taxon>Eutheria</taxon>
        <taxon>Euarchontoglires</taxon>
        <taxon>Primates</taxon>
        <taxon>Haplorrhini</taxon>
        <taxon>Catarrhini</taxon>
        <taxon>Hominidae</taxon>
        <taxon>Homo</taxon>
    </lineage>
</organism>
<feature type="chain" id="PRO_0000056312" description="RING finger and CHY zinc finger domain-containing protein 1">
    <location>
        <begin position="1"/>
        <end position="261"/>
    </location>
</feature>
<feature type="zinc finger region" description="CHY-type" evidence="2">
    <location>
        <begin position="13"/>
        <end position="80"/>
    </location>
</feature>
<feature type="zinc finger region" description="CTCHY-type" evidence="3">
    <location>
        <begin position="82"/>
        <end position="144"/>
    </location>
</feature>
<feature type="zinc finger region" description="RING-type" evidence="1">
    <location>
        <begin position="145"/>
        <end position="189"/>
    </location>
</feature>
<feature type="binding site" evidence="2">
    <location>
        <position position="20"/>
    </location>
    <ligand>
        <name>Zn(2+)</name>
        <dbReference type="ChEBI" id="CHEBI:29105"/>
        <label>1</label>
    </ligand>
</feature>
<feature type="binding site" evidence="2">
    <location>
        <position position="22"/>
    </location>
    <ligand>
        <name>Zn(2+)</name>
        <dbReference type="ChEBI" id="CHEBI:29105"/>
        <label>1</label>
    </ligand>
</feature>
<feature type="binding site" evidence="2">
    <location>
        <position position="33"/>
    </location>
    <ligand>
        <name>Zn(2+)</name>
        <dbReference type="ChEBI" id="CHEBI:29105"/>
        <label>2</label>
    </ligand>
</feature>
<feature type="binding site" evidence="2">
    <location>
        <position position="34"/>
    </location>
    <ligand>
        <name>Zn(2+)</name>
        <dbReference type="ChEBI" id="CHEBI:29105"/>
        <label>2</label>
    </ligand>
</feature>
<feature type="binding site" evidence="2">
    <location>
        <position position="40"/>
    </location>
    <ligand>
        <name>Zn(2+)</name>
        <dbReference type="ChEBI" id="CHEBI:29105"/>
        <label>1</label>
    </ligand>
</feature>
<feature type="binding site" evidence="2">
    <location>
        <position position="43"/>
    </location>
    <ligand>
        <name>Zn(2+)</name>
        <dbReference type="ChEBI" id="CHEBI:29105"/>
        <label>1</label>
    </ligand>
</feature>
<feature type="binding site" evidence="2">
    <location>
        <position position="44"/>
    </location>
    <ligand>
        <name>Zn(2+)</name>
        <dbReference type="ChEBI" id="CHEBI:29105"/>
        <label>2</label>
    </ligand>
</feature>
<feature type="binding site" evidence="2">
    <location>
        <position position="50"/>
    </location>
    <ligand>
        <name>Zn(2+)</name>
        <dbReference type="ChEBI" id="CHEBI:29105"/>
        <label>2</label>
    </ligand>
</feature>
<feature type="binding site" evidence="2">
    <location>
        <position position="62"/>
    </location>
    <ligand>
        <name>Zn(2+)</name>
        <dbReference type="ChEBI" id="CHEBI:29105"/>
        <label>3</label>
    </ligand>
</feature>
<feature type="binding site" evidence="2">
    <location>
        <position position="65"/>
    </location>
    <ligand>
        <name>Zn(2+)</name>
        <dbReference type="ChEBI" id="CHEBI:29105"/>
        <label>3</label>
    </ligand>
</feature>
<feature type="binding site" evidence="2">
    <location>
        <position position="75"/>
    </location>
    <ligand>
        <name>Zn(2+)</name>
        <dbReference type="ChEBI" id="CHEBI:29105"/>
        <label>3</label>
    </ligand>
</feature>
<feature type="binding site" evidence="2">
    <location>
        <position position="78"/>
    </location>
    <ligand>
        <name>Zn(2+)</name>
        <dbReference type="ChEBI" id="CHEBI:29105"/>
        <label>3</label>
    </ligand>
</feature>
<feature type="binding site" evidence="3">
    <location>
        <position position="87"/>
    </location>
    <ligand>
        <name>Zn(2+)</name>
        <dbReference type="ChEBI" id="CHEBI:29105"/>
        <label>4</label>
    </ligand>
</feature>
<feature type="binding site" evidence="3">
    <location>
        <position position="90"/>
    </location>
    <ligand>
        <name>Zn(2+)</name>
        <dbReference type="ChEBI" id="CHEBI:29105"/>
        <label>4</label>
    </ligand>
</feature>
<feature type="binding site" evidence="3">
    <location>
        <position position="101"/>
    </location>
    <ligand>
        <name>Zn(2+)</name>
        <dbReference type="ChEBI" id="CHEBI:29105"/>
        <label>4</label>
    </ligand>
</feature>
<feature type="binding site" evidence="3">
    <location>
        <position position="102"/>
    </location>
    <ligand>
        <name>Zn(2+)</name>
        <dbReference type="ChEBI" id="CHEBI:29105"/>
        <label>5</label>
    </ligand>
</feature>
<feature type="binding site" evidence="3">
    <location>
        <position position="105"/>
    </location>
    <ligand>
        <name>Zn(2+)</name>
        <dbReference type="ChEBI" id="CHEBI:29105"/>
        <label>5</label>
    </ligand>
</feature>
<feature type="binding site" evidence="3">
    <location>
        <position position="108"/>
    </location>
    <ligand>
        <name>Zn(2+)</name>
        <dbReference type="ChEBI" id="CHEBI:29105"/>
        <label>4</label>
    </ligand>
</feature>
<feature type="binding site" evidence="3">
    <location>
        <position position="118"/>
    </location>
    <ligand>
        <name>Zn(2+)</name>
        <dbReference type="ChEBI" id="CHEBI:29105"/>
        <label>5</label>
    </ligand>
</feature>
<feature type="binding site" evidence="3">
    <location>
        <position position="119"/>
    </location>
    <ligand>
        <name>Zn(2+)</name>
        <dbReference type="ChEBI" id="CHEBI:29105"/>
        <label>6</label>
    </ligand>
</feature>
<feature type="binding site" evidence="3">
    <location>
        <position position="122"/>
    </location>
    <ligand>
        <name>Zn(2+)</name>
        <dbReference type="ChEBI" id="CHEBI:29105"/>
        <label>6</label>
    </ligand>
</feature>
<feature type="binding site" evidence="3">
    <location>
        <position position="125"/>
    </location>
    <ligand>
        <name>Zn(2+)</name>
        <dbReference type="ChEBI" id="CHEBI:29105"/>
        <label>5</label>
    </ligand>
</feature>
<feature type="binding site" evidence="3">
    <location>
        <position position="134"/>
    </location>
    <ligand>
        <name>Zn(2+)</name>
        <dbReference type="ChEBI" id="CHEBI:29105"/>
        <label>6</label>
    </ligand>
</feature>
<feature type="binding site" evidence="3">
    <location>
        <position position="136"/>
    </location>
    <ligand>
        <name>Zn(2+)</name>
        <dbReference type="ChEBI" id="CHEBI:29105"/>
        <label>6</label>
    </ligand>
</feature>
<feature type="modified residue" description="Phosphoserine" evidence="21 22">
    <location>
        <position position="257"/>
    </location>
</feature>
<feature type="splice variant" id="VSP_053787" description="In isoform 6." evidence="20">
    <original>MAATAREDGASGQERGQRGCEHYDRGCLLK</original>
    <variation>MAPAVKSE</variation>
    <location>
        <begin position="1"/>
        <end position="30"/>
    </location>
</feature>
<feature type="splice variant" id="VSP_053788" description="In isoform 7 and isoform 8." evidence="20">
    <location>
        <begin position="31"/>
        <end position="70"/>
    </location>
</feature>
<feature type="splice variant" id="VSP_053385" description="In isoform 5." evidence="18">
    <original>IQHAQQTC</original>
    <variation>NSTCPTDL</variation>
    <location>
        <begin position="68"/>
        <end position="75"/>
    </location>
</feature>
<feature type="splice variant" id="VSP_053386" description="In isoform 5." evidence="18">
    <location>
        <begin position="76"/>
        <end position="261"/>
    </location>
</feature>
<feature type="splice variant" id="VSP_038467" description="In isoform 2 and isoform 8." evidence="17">
    <location>
        <begin position="171"/>
        <end position="179"/>
    </location>
</feature>
<feature type="splice variant" id="VSP_038468" description="In isoform 3." evidence="17">
    <location>
        <begin position="180"/>
        <end position="261"/>
    </location>
</feature>
<feature type="splice variant" id="VSP_044085" description="In isoform 4." evidence="19">
    <original>GYRCPLCMHSALDMTRYWRQLDDEVAQTPMPSEYQNMTVDILCNDCNGRSTVQFHILGMKCKICESYNTAQAGGRRISLDQQ</original>
    <variation>YDQVLETAG</variation>
    <location>
        <begin position="180"/>
        <end position="261"/>
    </location>
</feature>
<feature type="mutagenesis site" description="Abolishes E3 ubiquitin-protein ligase activity." evidence="10 15">
    <original>M</original>
    <variation>E</variation>
    <location>
        <position position="176"/>
    </location>
</feature>
<feature type="mutagenesis site" description="Abolishes E3 ubiquitin-protein ligase activity." evidence="10">
    <original>C</original>
    <variation>A</variation>
    <location>
        <position position="186"/>
    </location>
</feature>
<feature type="sequence conflict" description="In Ref. 1; ACT35531/ACT35532/ACT35533 and 3; AAK96896." evidence="20" ref="1 3">
    <original>SGQ</original>
    <variation>TGE</variation>
    <location>
        <begin position="11"/>
        <end position="13"/>
    </location>
</feature>
<feature type="sequence conflict" description="In Ref. 11; AAH47393." evidence="20" ref="11">
    <original>R</original>
    <variation>Q</variation>
    <location>
        <position position="142"/>
    </location>
</feature>
<feature type="sequence conflict" description="In Ref. 8; BAD92309." evidence="20" ref="8">
    <original>I</original>
    <variation>F</variation>
    <location>
        <position position="220"/>
    </location>
</feature>
<feature type="strand" evidence="25">
    <location>
        <begin position="17"/>
        <end position="19"/>
    </location>
</feature>
<feature type="strand" evidence="25">
    <location>
        <begin position="26"/>
        <end position="31"/>
    </location>
</feature>
<feature type="turn" evidence="25">
    <location>
        <begin position="32"/>
        <end position="35"/>
    </location>
</feature>
<feature type="strand" evidence="25">
    <location>
        <begin position="36"/>
        <end position="40"/>
    </location>
</feature>
<feature type="helix" evidence="25">
    <location>
        <begin position="41"/>
        <end position="45"/>
    </location>
</feature>
<feature type="strand" evidence="25">
    <location>
        <begin position="48"/>
        <end position="50"/>
    </location>
</feature>
<feature type="helix" evidence="25">
    <location>
        <begin position="54"/>
        <end position="56"/>
    </location>
</feature>
<feature type="strand" evidence="25">
    <location>
        <begin position="59"/>
        <end position="62"/>
    </location>
</feature>
<feature type="turn" evidence="25">
    <location>
        <begin position="63"/>
        <end position="65"/>
    </location>
</feature>
<feature type="strand" evidence="25">
    <location>
        <begin position="68"/>
        <end position="70"/>
    </location>
</feature>
<feature type="turn" evidence="25">
    <location>
        <begin position="76"/>
        <end position="78"/>
    </location>
</feature>
<feature type="strand" evidence="25">
    <location>
        <begin position="84"/>
        <end position="87"/>
    </location>
</feature>
<feature type="turn" evidence="25">
    <location>
        <begin position="88"/>
        <end position="91"/>
    </location>
</feature>
<feature type="strand" evidence="25">
    <location>
        <begin position="92"/>
        <end position="95"/>
    </location>
</feature>
<feature type="strand" evidence="25">
    <location>
        <begin position="100"/>
        <end position="102"/>
    </location>
</feature>
<feature type="turn" evidence="25">
    <location>
        <begin position="103"/>
        <end position="106"/>
    </location>
</feature>
<feature type="strand" evidence="25">
    <location>
        <begin position="107"/>
        <end position="109"/>
    </location>
</feature>
<feature type="helix" evidence="25">
    <location>
        <begin position="113"/>
        <end position="115"/>
    </location>
</feature>
<feature type="strand" evidence="25">
    <location>
        <begin position="116"/>
        <end position="119"/>
    </location>
</feature>
<feature type="turn" evidence="25">
    <location>
        <begin position="120"/>
        <end position="123"/>
    </location>
</feature>
<feature type="strand" evidence="25">
    <location>
        <begin position="124"/>
        <end position="127"/>
    </location>
</feature>
<feature type="helix" evidence="25">
    <location>
        <begin position="128"/>
        <end position="130"/>
    </location>
</feature>
<feature type="helix" evidence="25">
    <location>
        <begin position="140"/>
        <end position="142"/>
    </location>
</feature>
<feature type="turn" evidence="25">
    <location>
        <begin position="146"/>
        <end position="148"/>
    </location>
</feature>
<feature type="strand" evidence="25">
    <location>
        <begin position="150"/>
        <end position="152"/>
    </location>
</feature>
<feature type="turn" evidence="23">
    <location>
        <begin position="156"/>
        <end position="158"/>
    </location>
</feature>
<feature type="strand" evidence="25">
    <location>
        <begin position="159"/>
        <end position="161"/>
    </location>
</feature>
<feature type="strand" evidence="25">
    <location>
        <begin position="167"/>
        <end position="169"/>
    </location>
</feature>
<feature type="helix" evidence="25">
    <location>
        <begin position="170"/>
        <end position="176"/>
    </location>
</feature>
<feature type="turn" evidence="25">
    <location>
        <begin position="177"/>
        <end position="179"/>
    </location>
</feature>
<feature type="turn" evidence="25">
    <location>
        <begin position="184"/>
        <end position="186"/>
    </location>
</feature>
<feature type="strand" evidence="24">
    <location>
        <begin position="217"/>
        <end position="225"/>
    </location>
</feature>
<feature type="strand" evidence="24">
    <location>
        <begin position="228"/>
        <end position="232"/>
    </location>
</feature>
<feature type="turn" evidence="24">
    <location>
        <begin position="241"/>
        <end position="243"/>
    </location>
</feature>
<feature type="strand" evidence="24">
    <location>
        <begin position="248"/>
        <end position="251"/>
    </location>
</feature>
<keyword id="KW-0002">3D-structure</keyword>
<keyword id="KW-0025">Alternative splicing</keyword>
<keyword id="KW-0963">Cytoplasm</keyword>
<keyword id="KW-0479">Metal-binding</keyword>
<keyword id="KW-0539">Nucleus</keyword>
<keyword id="KW-0597">Phosphoprotein</keyword>
<keyword id="KW-1267">Proteomics identification</keyword>
<keyword id="KW-1185">Reference proteome</keyword>
<keyword id="KW-0808">Transferase</keyword>
<keyword id="KW-0832">Ubl conjugation</keyword>
<keyword id="KW-0833">Ubl conjugation pathway</keyword>
<keyword id="KW-0862">Zinc</keyword>
<keyword id="KW-0863">Zinc-finger</keyword>